<proteinExistence type="inferred from homology"/>
<feature type="chain" id="PRO_1000072965" description="3-isopropylmalate dehydratase small subunit">
    <location>
        <begin position="1"/>
        <end position="167"/>
    </location>
</feature>
<reference key="1">
    <citation type="journal article" date="2011" name="J. Bacteriol.">
        <title>Complete genome sequence and updated annotation of Desulfovibrio alaskensis G20.</title>
        <authorList>
            <person name="Hauser L.J."/>
            <person name="Land M.L."/>
            <person name="Brown S.D."/>
            <person name="Larimer F."/>
            <person name="Keller K.L."/>
            <person name="Rapp-Giles B.J."/>
            <person name="Price M.N."/>
            <person name="Lin M."/>
            <person name="Bruce D.C."/>
            <person name="Detter J.C."/>
            <person name="Tapia R."/>
            <person name="Han C.S."/>
            <person name="Goodwin L.A."/>
            <person name="Cheng J.F."/>
            <person name="Pitluck S."/>
            <person name="Copeland A."/>
            <person name="Lucas S."/>
            <person name="Nolan M."/>
            <person name="Lapidus A.L."/>
            <person name="Palumbo A.V."/>
            <person name="Wall J.D."/>
        </authorList>
    </citation>
    <scope>NUCLEOTIDE SEQUENCE [LARGE SCALE GENOMIC DNA]</scope>
    <source>
        <strain>ATCC BAA-1058 / DSM 17464 / G20</strain>
    </source>
</reference>
<comment type="function">
    <text evidence="1">Catalyzes the isomerization between 2-isopropylmalate and 3-isopropylmalate, via the formation of 2-isopropylmaleate.</text>
</comment>
<comment type="catalytic activity">
    <reaction evidence="1">
        <text>(2R,3S)-3-isopropylmalate = (2S)-2-isopropylmalate</text>
        <dbReference type="Rhea" id="RHEA:32287"/>
        <dbReference type="ChEBI" id="CHEBI:1178"/>
        <dbReference type="ChEBI" id="CHEBI:35121"/>
        <dbReference type="EC" id="4.2.1.33"/>
    </reaction>
</comment>
<comment type="pathway">
    <text evidence="1">Amino-acid biosynthesis; L-leucine biosynthesis; L-leucine from 3-methyl-2-oxobutanoate: step 2/4.</text>
</comment>
<comment type="subunit">
    <text evidence="1">Heterodimer of LeuC and LeuD.</text>
</comment>
<comment type="similarity">
    <text evidence="1">Belongs to the LeuD family. LeuD type 2 subfamily.</text>
</comment>
<evidence type="ECO:0000255" key="1">
    <source>
        <dbReference type="HAMAP-Rule" id="MF_01032"/>
    </source>
</evidence>
<keyword id="KW-0028">Amino-acid biosynthesis</keyword>
<keyword id="KW-0100">Branched-chain amino acid biosynthesis</keyword>
<keyword id="KW-0432">Leucine biosynthesis</keyword>
<keyword id="KW-0456">Lyase</keyword>
<keyword id="KW-1185">Reference proteome</keyword>
<sequence length="167" mass="17906">MQYNGTARKVGDHIDTDAIIPARFLVTTDPAQLGANCMEGLEHGWVSRVQQGDIMVGGKNFGCGSSREHAPIAILGAGMPVVVAHSFARIFYRNGFNMGLILIEIGDDADRIHDGDVLSVDVENGRITNHTTGDVISCPPLPPFMHDILDKGGLVPYVRERLAAGDA</sequence>
<name>LEUD_OLEA2</name>
<accession>Q30WD2</accession>
<dbReference type="EC" id="4.2.1.33" evidence="1"/>
<dbReference type="EMBL" id="CP000112">
    <property type="protein sequence ID" value="ABB40014.1"/>
    <property type="molecule type" value="Genomic_DNA"/>
</dbReference>
<dbReference type="RefSeq" id="WP_011368965.1">
    <property type="nucleotide sequence ID" value="NC_007519.1"/>
</dbReference>
<dbReference type="SMR" id="Q30WD2"/>
<dbReference type="STRING" id="207559.Dde_3220"/>
<dbReference type="KEGG" id="dde:Dde_3220"/>
<dbReference type="eggNOG" id="COG0066">
    <property type="taxonomic scope" value="Bacteria"/>
</dbReference>
<dbReference type="HOGENOM" id="CLU_081378_1_1_7"/>
<dbReference type="UniPathway" id="UPA00048">
    <property type="reaction ID" value="UER00071"/>
</dbReference>
<dbReference type="Proteomes" id="UP000002710">
    <property type="component" value="Chromosome"/>
</dbReference>
<dbReference type="GO" id="GO:0003861">
    <property type="term" value="F:3-isopropylmalate dehydratase activity"/>
    <property type="evidence" value="ECO:0007669"/>
    <property type="project" value="UniProtKB-UniRule"/>
</dbReference>
<dbReference type="GO" id="GO:0009098">
    <property type="term" value="P:L-leucine biosynthetic process"/>
    <property type="evidence" value="ECO:0007669"/>
    <property type="project" value="UniProtKB-UniRule"/>
</dbReference>
<dbReference type="CDD" id="cd01577">
    <property type="entry name" value="IPMI_Swivel"/>
    <property type="match status" value="1"/>
</dbReference>
<dbReference type="Gene3D" id="3.20.19.10">
    <property type="entry name" value="Aconitase, domain 4"/>
    <property type="match status" value="1"/>
</dbReference>
<dbReference type="HAMAP" id="MF_01032">
    <property type="entry name" value="LeuD_type2"/>
    <property type="match status" value="1"/>
</dbReference>
<dbReference type="InterPro" id="IPR015928">
    <property type="entry name" value="Aconitase/3IPM_dehydase_swvl"/>
</dbReference>
<dbReference type="InterPro" id="IPR000573">
    <property type="entry name" value="AconitaseA/IPMdHydase_ssu_swvl"/>
</dbReference>
<dbReference type="InterPro" id="IPR033940">
    <property type="entry name" value="IPMI_Swivel"/>
</dbReference>
<dbReference type="InterPro" id="IPR050075">
    <property type="entry name" value="LeuD"/>
</dbReference>
<dbReference type="InterPro" id="IPR011827">
    <property type="entry name" value="LeuD_type2/HacB/DmdB"/>
</dbReference>
<dbReference type="NCBIfam" id="TIGR02087">
    <property type="entry name" value="LEUD_arch"/>
    <property type="match status" value="1"/>
</dbReference>
<dbReference type="PANTHER" id="PTHR43345:SF2">
    <property type="entry name" value="3-ISOPROPYLMALATE DEHYDRATASE SMALL SUBUNIT 1"/>
    <property type="match status" value="1"/>
</dbReference>
<dbReference type="PANTHER" id="PTHR43345">
    <property type="entry name" value="3-ISOPROPYLMALATE DEHYDRATASE SMALL SUBUNIT 2-RELATED-RELATED"/>
    <property type="match status" value="1"/>
</dbReference>
<dbReference type="Pfam" id="PF00694">
    <property type="entry name" value="Aconitase_C"/>
    <property type="match status" value="1"/>
</dbReference>
<dbReference type="SUPFAM" id="SSF52016">
    <property type="entry name" value="LeuD/IlvD-like"/>
    <property type="match status" value="1"/>
</dbReference>
<gene>
    <name evidence="1" type="primary">leuD</name>
    <name type="ordered locus">Dde_3220</name>
</gene>
<organism>
    <name type="scientific">Oleidesulfovibrio alaskensis (strain ATCC BAA-1058 / DSM 17464 / G20)</name>
    <name type="common">Desulfovibrio alaskensis</name>
    <dbReference type="NCBI Taxonomy" id="207559"/>
    <lineage>
        <taxon>Bacteria</taxon>
        <taxon>Pseudomonadati</taxon>
        <taxon>Thermodesulfobacteriota</taxon>
        <taxon>Desulfovibrionia</taxon>
        <taxon>Desulfovibrionales</taxon>
        <taxon>Desulfovibrionaceae</taxon>
        <taxon>Oleidesulfovibrio</taxon>
    </lineage>
</organism>
<protein>
    <recommendedName>
        <fullName evidence="1">3-isopropylmalate dehydratase small subunit</fullName>
        <ecNumber evidence="1">4.2.1.33</ecNumber>
    </recommendedName>
    <alternativeName>
        <fullName evidence="1">Alpha-IPM isomerase</fullName>
        <shortName evidence="1">IPMI</shortName>
    </alternativeName>
    <alternativeName>
        <fullName evidence="1">Isopropylmalate isomerase</fullName>
    </alternativeName>
</protein>